<reference key="1">
    <citation type="submission" date="2006-10" db="EMBL/GenBank/DDBJ databases">
        <authorList>
            <consortium name="Sanger Xenopus tropicalis EST/cDNA project"/>
        </authorList>
    </citation>
    <scope>NUCLEOTIDE SEQUENCE [LARGE SCALE MRNA]</scope>
    <source>
        <tissue>Gastrula</tissue>
    </source>
</reference>
<reference key="2">
    <citation type="submission" date="2004-08" db="EMBL/GenBank/DDBJ databases">
        <authorList>
            <consortium name="NIH - Xenopus Gene Collection (XGC) project"/>
        </authorList>
    </citation>
    <scope>NUCLEOTIDE SEQUENCE [LARGE SCALE MRNA]</scope>
    <source>
        <tissue>Embryo</tissue>
    </source>
</reference>
<sequence>MKALILVGGYGTRLRPLTLSVPKPLVDFCNKPILLHQVEALVKAGVNHVILAVSYMSDMLEKEMKEQEKRLGIRISMSHEKEPLGTAGPLALARELLTENSDPFFVLNSDVICDFPFEEMVRFHKHHGKEGTIVVTKVEEPSKYGVVVYEAESGQIQRFVEKPQVFVSNKINSGLYIFSPAVLDRIQLRPTSIEKEIFPAMAQEGQLFAMELQGFWMDIGQPKDFLTGMCMYLQSVRQKHPEWLHVGPGFIGNVLVDPTAKIGQNCSIGPNVTIGPGVTVEDGVRIKRCTIMKGSRLHSHSWLESSIVGWSSSVGQWVRMENVTVLGEDVIVNDELYLNGANVLPHKCISESVPEPRIIM</sequence>
<feature type="chain" id="PRO_0000307168" description="Mannose-1-phosphate guanylyltransferase catalytic subunit beta">
    <location>
        <begin position="1"/>
        <end position="360"/>
    </location>
</feature>
<feature type="region of interest" description="Substrate-binding domain" evidence="2">
    <location>
        <begin position="2"/>
        <end position="222"/>
    </location>
</feature>
<feature type="region of interest" description="Hexapeptide repeat domain" evidence="2">
    <location>
        <begin position="245"/>
        <end position="360"/>
    </location>
</feature>
<feature type="active site" evidence="2">
    <location>
        <position position="162"/>
    </location>
</feature>
<feature type="binding site" evidence="2">
    <location>
        <position position="110"/>
    </location>
    <ligand>
        <name>GDP-alpha-D-mannose</name>
        <dbReference type="ChEBI" id="CHEBI:57527"/>
    </ligand>
</feature>
<feature type="binding site" evidence="2">
    <location>
        <position position="110"/>
    </location>
    <ligand>
        <name>Mg(2+)</name>
        <dbReference type="ChEBI" id="CHEBI:18420"/>
    </ligand>
</feature>
<feature type="binding site" evidence="2">
    <location>
        <position position="218"/>
    </location>
    <ligand>
        <name>GDP-alpha-D-mannose</name>
        <dbReference type="ChEBI" id="CHEBI:57527"/>
    </ligand>
</feature>
<feature type="binding site" evidence="2">
    <location>
        <position position="218"/>
    </location>
    <ligand>
        <name>Mg(2+)</name>
        <dbReference type="ChEBI" id="CHEBI:18420"/>
    </ligand>
</feature>
<evidence type="ECO:0000250" key="1">
    <source>
        <dbReference type="UniProtKB" id="P0C5I2"/>
    </source>
</evidence>
<evidence type="ECO:0000250" key="2">
    <source>
        <dbReference type="UniProtKB" id="Q9Y5P6"/>
    </source>
</evidence>
<evidence type="ECO:0000305" key="3"/>
<evidence type="ECO:0000312" key="4">
    <source>
        <dbReference type="Proteomes" id="UP000008143"/>
    </source>
</evidence>
<keyword id="KW-0342">GTP-binding</keyword>
<keyword id="KW-0460">Magnesium</keyword>
<keyword id="KW-0479">Metal-binding</keyword>
<keyword id="KW-0547">Nucleotide-binding</keyword>
<keyword id="KW-0548">Nucleotidyltransferase</keyword>
<keyword id="KW-1185">Reference proteome</keyword>
<keyword id="KW-0808">Transferase</keyword>
<dbReference type="EC" id="2.7.7.13" evidence="1"/>
<dbReference type="EMBL" id="CR760719">
    <property type="protein sequence ID" value="CAJ83390.1"/>
    <property type="molecule type" value="mRNA"/>
</dbReference>
<dbReference type="EMBL" id="BC080150">
    <property type="protein sequence ID" value="AAH80150.1"/>
    <property type="molecule type" value="mRNA"/>
</dbReference>
<dbReference type="RefSeq" id="NP_001008434.1">
    <property type="nucleotide sequence ID" value="NM_001008434.2"/>
</dbReference>
<dbReference type="RefSeq" id="XP_012820014.1">
    <property type="nucleotide sequence ID" value="XM_012964560.3"/>
</dbReference>
<dbReference type="SMR" id="Q68EQ1"/>
<dbReference type="FunCoup" id="Q68EQ1">
    <property type="interactions" value="894"/>
</dbReference>
<dbReference type="STRING" id="8364.ENSXETP00000052423"/>
<dbReference type="PaxDb" id="8364-ENSXETP00000013087"/>
<dbReference type="GeneID" id="493267"/>
<dbReference type="KEGG" id="xtr:493267"/>
<dbReference type="AGR" id="Xenbase:XB-GENE-922650"/>
<dbReference type="CTD" id="29925"/>
<dbReference type="Xenbase" id="XB-GENE-922650">
    <property type="gene designation" value="gmppb"/>
</dbReference>
<dbReference type="eggNOG" id="KOG1322">
    <property type="taxonomic scope" value="Eukaryota"/>
</dbReference>
<dbReference type="HOGENOM" id="CLU_029499_0_0_1"/>
<dbReference type="InParanoid" id="Q68EQ1"/>
<dbReference type="OMA" id="GPNCWIC"/>
<dbReference type="OrthoDB" id="1733332at2759"/>
<dbReference type="TreeFam" id="TF300718"/>
<dbReference type="Reactome" id="R-XTR-446205">
    <property type="pathway name" value="Synthesis of GDP-mannose"/>
</dbReference>
<dbReference type="UniPathway" id="UPA00126">
    <property type="reaction ID" value="UER00930"/>
</dbReference>
<dbReference type="Proteomes" id="UP000008143">
    <property type="component" value="Chromosome 4"/>
</dbReference>
<dbReference type="GO" id="GO:0005525">
    <property type="term" value="F:GTP binding"/>
    <property type="evidence" value="ECO:0007669"/>
    <property type="project" value="UniProtKB-KW"/>
</dbReference>
<dbReference type="GO" id="GO:0004475">
    <property type="term" value="F:mannose-1-phosphate guanylyltransferase (GTP) activity"/>
    <property type="evidence" value="ECO:0007669"/>
    <property type="project" value="UniProtKB-EC"/>
</dbReference>
<dbReference type="GO" id="GO:0046872">
    <property type="term" value="F:metal ion binding"/>
    <property type="evidence" value="ECO:0007669"/>
    <property type="project" value="UniProtKB-KW"/>
</dbReference>
<dbReference type="GO" id="GO:0009298">
    <property type="term" value="P:GDP-mannose biosynthetic process"/>
    <property type="evidence" value="ECO:0000250"/>
    <property type="project" value="UniProtKB"/>
</dbReference>
<dbReference type="CDD" id="cd06425">
    <property type="entry name" value="M1P_guanylylT_B_like_N"/>
    <property type="match status" value="1"/>
</dbReference>
<dbReference type="FunFam" id="2.160.10.10:FF:000018">
    <property type="entry name" value="Mannose-1-phosphate guanyltransferase beta"/>
    <property type="match status" value="1"/>
</dbReference>
<dbReference type="FunFam" id="3.90.550.10:FF:000013">
    <property type="entry name" value="mannose-1-phosphate guanyltransferase beta"/>
    <property type="match status" value="1"/>
</dbReference>
<dbReference type="Gene3D" id="2.160.10.10">
    <property type="entry name" value="Hexapeptide repeat proteins"/>
    <property type="match status" value="1"/>
</dbReference>
<dbReference type="Gene3D" id="3.90.550.10">
    <property type="entry name" value="Spore Coat Polysaccharide Biosynthesis Protein SpsA, Chain A"/>
    <property type="match status" value="1"/>
</dbReference>
<dbReference type="InterPro" id="IPR056729">
    <property type="entry name" value="GMPPB_C"/>
</dbReference>
<dbReference type="InterPro" id="IPR045233">
    <property type="entry name" value="GMPPB_N"/>
</dbReference>
<dbReference type="InterPro" id="IPR018357">
    <property type="entry name" value="Hexapep_transf_CS"/>
</dbReference>
<dbReference type="InterPro" id="IPR050486">
    <property type="entry name" value="Mannose-1P_guanyltransferase"/>
</dbReference>
<dbReference type="InterPro" id="IPR005835">
    <property type="entry name" value="NTP_transferase_dom"/>
</dbReference>
<dbReference type="InterPro" id="IPR029044">
    <property type="entry name" value="Nucleotide-diphossugar_trans"/>
</dbReference>
<dbReference type="PANTHER" id="PTHR22572">
    <property type="entry name" value="SUGAR-1-PHOSPHATE GUANYL TRANSFERASE"/>
    <property type="match status" value="1"/>
</dbReference>
<dbReference type="Pfam" id="PF25087">
    <property type="entry name" value="GMPPB_C"/>
    <property type="match status" value="1"/>
</dbReference>
<dbReference type="Pfam" id="PF00483">
    <property type="entry name" value="NTP_transferase"/>
    <property type="match status" value="1"/>
</dbReference>
<dbReference type="SUPFAM" id="SSF53448">
    <property type="entry name" value="Nucleotide-diphospho-sugar transferases"/>
    <property type="match status" value="1"/>
</dbReference>
<dbReference type="PROSITE" id="PS00101">
    <property type="entry name" value="HEXAPEP_TRANSFERASES"/>
    <property type="match status" value="1"/>
</dbReference>
<accession>Q68EQ1</accession>
<proteinExistence type="evidence at transcript level"/>
<protein>
    <recommendedName>
        <fullName evidence="3">Mannose-1-phosphate guanylyltransferase catalytic subunit beta</fullName>
        <ecNumber evidence="1">2.7.7.13</ecNumber>
    </recommendedName>
    <alternativeName>
        <fullName>GDP-mannose pyrophosphorylase B</fullName>
    </alternativeName>
    <alternativeName>
        <fullName>GTP-mannose-1-phosphate guanylyltransferase beta</fullName>
    </alternativeName>
</protein>
<comment type="function">
    <text evidence="1 2">Catalytic subunit of the GMPPA-GMPPB mannose-1-phosphate guanylyltransferase complex (By similarity). Catalyzes the formation of GDP-mannose, an essential precursor of glycan moieties of glycoproteins and glycolipids (By similarity). Can catalyze the reverse reaction in vitro (By similarity). Together with GMPPA regulates GDP-alpha-D-mannose levels (By similarity).</text>
</comment>
<comment type="catalytic activity">
    <reaction evidence="1">
        <text>alpha-D-mannose 1-phosphate + GTP + H(+) = GDP-alpha-D-mannose + diphosphate</text>
        <dbReference type="Rhea" id="RHEA:15229"/>
        <dbReference type="ChEBI" id="CHEBI:15378"/>
        <dbReference type="ChEBI" id="CHEBI:33019"/>
        <dbReference type="ChEBI" id="CHEBI:37565"/>
        <dbReference type="ChEBI" id="CHEBI:57527"/>
        <dbReference type="ChEBI" id="CHEBI:58409"/>
        <dbReference type="EC" id="2.7.7.13"/>
    </reaction>
    <physiologicalReaction direction="left-to-right" evidence="2">
        <dbReference type="Rhea" id="RHEA:15230"/>
    </physiologicalReaction>
    <physiologicalReaction direction="right-to-left" evidence="2">
        <dbReference type="Rhea" id="RHEA:15231"/>
    </physiologicalReaction>
</comment>
<comment type="cofactor">
    <cofactor evidence="2">
        <name>Mg(2+)</name>
        <dbReference type="ChEBI" id="CHEBI:18420"/>
    </cofactor>
    <text evidence="2">Coordinates binding with substrate and required for enzymatic activity.</text>
</comment>
<comment type="activity regulation">
    <text evidence="2">Enzyme activity is reduced by incorporation into the GMPPA-GMPPB mannose-1-phosphate guanylyltransferase complex. Allosterically inhibited, when part of the GMPPA-GMPPB complex, by GDP-alpha-D-mannose binding to GMPPA.</text>
</comment>
<comment type="pathway">
    <text evidence="1">Nucleotide-sugar biosynthesis; GDP-alpha-D-mannose biosynthesis; GDP-alpha-D-mannose from alpha-D-mannose 1-phosphate (GTP route): step 1/1.</text>
</comment>
<comment type="subunit">
    <text evidence="2">Component of the GMPPA-GMPPB mannose-1-phosphate guanylyltransferase complex composed of 4 gmppa subunits and 8 gmppb subunits; the complex is organized into three layers, a central layer made up of 2 gmppa dimers sandwiched between two layers each made up of 2 gmppb dimers (By similarity). Catalytic activity of gmppb is reduced when part of the complex and binding of GDP-alpha-D-Mannose by gmppa induces allosteric feedback inhibition of gmppb (By similarity).</text>
</comment>
<comment type="domain">
    <text evidence="2">The N-terminal substrate-binding domain adopts a Rossman-like fold and has a binding pocket for GTP or GDP-alpha-D-mannose (By similarity). Substrate binding is coordinated by an Mg(2+) ion (By similarity).</text>
</comment>
<comment type="domain">
    <text evidence="2">The C-terminal domain consists of a series of tandem hexapeptide repeats that adopt a beta-helix conformation (By similarity). The beta-helix forms several protein interaction surfaces involved in assembly of the GMPPA-GMPPB mannose-1-phosphate guanylyltransferase complex (By similarity).</text>
</comment>
<comment type="similarity">
    <text evidence="3">Belongs to the transferase hexapeptide repeat family.</text>
</comment>
<name>GMPPB_XENTR</name>
<gene>
    <name type="primary">gmppb</name>
    <name type="ORF">TGas135o02.1</name>
</gene>
<organism evidence="4">
    <name type="scientific">Xenopus tropicalis</name>
    <name type="common">Western clawed frog</name>
    <name type="synonym">Silurana tropicalis</name>
    <dbReference type="NCBI Taxonomy" id="8364"/>
    <lineage>
        <taxon>Eukaryota</taxon>
        <taxon>Metazoa</taxon>
        <taxon>Chordata</taxon>
        <taxon>Craniata</taxon>
        <taxon>Vertebrata</taxon>
        <taxon>Euteleostomi</taxon>
        <taxon>Amphibia</taxon>
        <taxon>Batrachia</taxon>
        <taxon>Anura</taxon>
        <taxon>Pipoidea</taxon>
        <taxon>Pipidae</taxon>
        <taxon>Xenopodinae</taxon>
        <taxon>Xenopus</taxon>
        <taxon>Silurana</taxon>
    </lineage>
</organism>